<organism>
    <name type="scientific">Parabacteroides distasonis (strain ATCC 8503 / DSM 20701 / CIP 104284 / JCM 5825 / NCTC 11152)</name>
    <dbReference type="NCBI Taxonomy" id="435591"/>
    <lineage>
        <taxon>Bacteria</taxon>
        <taxon>Pseudomonadati</taxon>
        <taxon>Bacteroidota</taxon>
        <taxon>Bacteroidia</taxon>
        <taxon>Bacteroidales</taxon>
        <taxon>Tannerellaceae</taxon>
        <taxon>Parabacteroides</taxon>
    </lineage>
</organism>
<comment type="function">
    <text evidence="1">The alpha subunit is responsible for the aldol cleavage of indoleglycerol phosphate to indole and glyceraldehyde 3-phosphate.</text>
</comment>
<comment type="catalytic activity">
    <reaction evidence="1">
        <text>(1S,2R)-1-C-(indol-3-yl)glycerol 3-phosphate + L-serine = D-glyceraldehyde 3-phosphate + L-tryptophan + H2O</text>
        <dbReference type="Rhea" id="RHEA:10532"/>
        <dbReference type="ChEBI" id="CHEBI:15377"/>
        <dbReference type="ChEBI" id="CHEBI:33384"/>
        <dbReference type="ChEBI" id="CHEBI:57912"/>
        <dbReference type="ChEBI" id="CHEBI:58866"/>
        <dbReference type="ChEBI" id="CHEBI:59776"/>
        <dbReference type="EC" id="4.2.1.20"/>
    </reaction>
</comment>
<comment type="pathway">
    <text evidence="1">Amino-acid biosynthesis; L-tryptophan biosynthesis; L-tryptophan from chorismate: step 5/5.</text>
</comment>
<comment type="subunit">
    <text evidence="1">Tetramer of two alpha and two beta chains.</text>
</comment>
<comment type="similarity">
    <text evidence="1">Belongs to the TrpA family.</text>
</comment>
<protein>
    <recommendedName>
        <fullName evidence="1">Tryptophan synthase alpha chain</fullName>
        <ecNumber evidence="1">4.2.1.20</ecNumber>
    </recommendedName>
</protein>
<proteinExistence type="inferred from homology"/>
<gene>
    <name evidence="1" type="primary">trpA</name>
    <name type="ordered locus">BDI_0586</name>
</gene>
<keyword id="KW-0028">Amino-acid biosynthesis</keyword>
<keyword id="KW-0057">Aromatic amino acid biosynthesis</keyword>
<keyword id="KW-0456">Lyase</keyword>
<keyword id="KW-1185">Reference proteome</keyword>
<keyword id="KW-0822">Tryptophan biosynthesis</keyword>
<reference key="1">
    <citation type="journal article" date="2007" name="PLoS Biol.">
        <title>Evolution of symbiotic bacteria in the distal human intestine.</title>
        <authorList>
            <person name="Xu J."/>
            <person name="Mahowald M.A."/>
            <person name="Ley R.E."/>
            <person name="Lozupone C.A."/>
            <person name="Hamady M."/>
            <person name="Martens E.C."/>
            <person name="Henrissat B."/>
            <person name="Coutinho P.M."/>
            <person name="Minx P."/>
            <person name="Latreille P."/>
            <person name="Cordum H."/>
            <person name="Van Brunt A."/>
            <person name="Kim K."/>
            <person name="Fulton R.S."/>
            <person name="Fulton L.A."/>
            <person name="Clifton S.W."/>
            <person name="Wilson R.K."/>
            <person name="Knight R.D."/>
            <person name="Gordon J.I."/>
        </authorList>
    </citation>
    <scope>NUCLEOTIDE SEQUENCE [LARGE SCALE GENOMIC DNA]</scope>
    <source>
        <strain>ATCC 8503 / DSM 20701 / CIP 104284 / JCM 5825 / NCTC 11152</strain>
    </source>
</reference>
<sequence>MNRITNLFQTQKDGILSVYFTAGYPNLNDTASILKALQAKGIHMVEVGIPFSDPMADGPVIQEAATQALRNGMSLHLLFGQLREIRSEVQIPIILMGYLNPIMQYGFEKFCASCVEAGVDGMIIPDLPYADYIADYKEIADRHDLKMIMLITPETSEERIRLIDAHTSGFIYMVSSAATTGAQQDFNEQKQAYFRRINAMNLQNPRLVGFGISNKATFEAAIAHSSGAIIGSKFVQLLKSEATPAEAVDKLLEALKQ</sequence>
<dbReference type="EC" id="4.2.1.20" evidence="1"/>
<dbReference type="EMBL" id="CP000140">
    <property type="protein sequence ID" value="ABR42362.1"/>
    <property type="molecule type" value="Genomic_DNA"/>
</dbReference>
<dbReference type="RefSeq" id="WP_011966081.1">
    <property type="nucleotide sequence ID" value="NC_009615.1"/>
</dbReference>
<dbReference type="SMR" id="A6L9J8"/>
<dbReference type="STRING" id="435591.BDI_0586"/>
<dbReference type="PaxDb" id="435591-BDI_0586"/>
<dbReference type="KEGG" id="pdi:BDI_0586"/>
<dbReference type="PATRIC" id="fig|435591.13.peg.571"/>
<dbReference type="eggNOG" id="COG0159">
    <property type="taxonomic scope" value="Bacteria"/>
</dbReference>
<dbReference type="HOGENOM" id="CLU_016734_0_0_10"/>
<dbReference type="BioCyc" id="PDIS435591:G1G5A-603-MONOMER"/>
<dbReference type="UniPathway" id="UPA00035">
    <property type="reaction ID" value="UER00044"/>
</dbReference>
<dbReference type="Proteomes" id="UP000000566">
    <property type="component" value="Chromosome"/>
</dbReference>
<dbReference type="GO" id="GO:0005829">
    <property type="term" value="C:cytosol"/>
    <property type="evidence" value="ECO:0007669"/>
    <property type="project" value="TreeGrafter"/>
</dbReference>
<dbReference type="GO" id="GO:0004834">
    <property type="term" value="F:tryptophan synthase activity"/>
    <property type="evidence" value="ECO:0007669"/>
    <property type="project" value="UniProtKB-UniRule"/>
</dbReference>
<dbReference type="CDD" id="cd04724">
    <property type="entry name" value="Tryptophan_synthase_alpha"/>
    <property type="match status" value="1"/>
</dbReference>
<dbReference type="FunFam" id="3.20.20.70:FF:000037">
    <property type="entry name" value="Tryptophan synthase alpha chain"/>
    <property type="match status" value="1"/>
</dbReference>
<dbReference type="Gene3D" id="3.20.20.70">
    <property type="entry name" value="Aldolase class I"/>
    <property type="match status" value="1"/>
</dbReference>
<dbReference type="HAMAP" id="MF_00131">
    <property type="entry name" value="Trp_synth_alpha"/>
    <property type="match status" value="1"/>
</dbReference>
<dbReference type="InterPro" id="IPR013785">
    <property type="entry name" value="Aldolase_TIM"/>
</dbReference>
<dbReference type="InterPro" id="IPR011060">
    <property type="entry name" value="RibuloseP-bd_barrel"/>
</dbReference>
<dbReference type="InterPro" id="IPR018204">
    <property type="entry name" value="Trp_synthase_alpha_AS"/>
</dbReference>
<dbReference type="InterPro" id="IPR002028">
    <property type="entry name" value="Trp_synthase_suA"/>
</dbReference>
<dbReference type="NCBIfam" id="TIGR00262">
    <property type="entry name" value="trpA"/>
    <property type="match status" value="1"/>
</dbReference>
<dbReference type="PANTHER" id="PTHR43406:SF1">
    <property type="entry name" value="TRYPTOPHAN SYNTHASE ALPHA CHAIN, CHLOROPLASTIC"/>
    <property type="match status" value="1"/>
</dbReference>
<dbReference type="PANTHER" id="PTHR43406">
    <property type="entry name" value="TRYPTOPHAN SYNTHASE, ALPHA CHAIN"/>
    <property type="match status" value="1"/>
</dbReference>
<dbReference type="Pfam" id="PF00290">
    <property type="entry name" value="Trp_syntA"/>
    <property type="match status" value="1"/>
</dbReference>
<dbReference type="SUPFAM" id="SSF51366">
    <property type="entry name" value="Ribulose-phoshate binding barrel"/>
    <property type="match status" value="1"/>
</dbReference>
<dbReference type="PROSITE" id="PS00167">
    <property type="entry name" value="TRP_SYNTHASE_ALPHA"/>
    <property type="match status" value="1"/>
</dbReference>
<evidence type="ECO:0000255" key="1">
    <source>
        <dbReference type="HAMAP-Rule" id="MF_00131"/>
    </source>
</evidence>
<name>TRPA_PARD8</name>
<feature type="chain" id="PRO_1000018243" description="Tryptophan synthase alpha chain">
    <location>
        <begin position="1"/>
        <end position="257"/>
    </location>
</feature>
<feature type="active site" description="Proton acceptor" evidence="1">
    <location>
        <position position="46"/>
    </location>
</feature>
<feature type="active site" description="Proton acceptor" evidence="1">
    <location>
        <position position="57"/>
    </location>
</feature>
<accession>A6L9J8</accession>